<protein>
    <recommendedName>
        <fullName>Zinc transporter ZIP1</fullName>
    </recommendedName>
    <alternativeName>
        <fullName>Solute carrier family 39 member 1</fullName>
    </alternativeName>
    <alternativeName>
        <fullName>Zinc-iron-regulated transporter-like</fullName>
    </alternativeName>
    <alternativeName>
        <fullName>Zrt- and Irt-like protein 1</fullName>
        <shortName>ZIP-1</shortName>
        <shortName>mZIP1</shortName>
    </alternativeName>
</protein>
<feature type="chain" id="PRO_0000068764" description="Zinc transporter ZIP1">
    <location>
        <begin position="1"/>
        <end position="324"/>
    </location>
</feature>
<feature type="topological domain" description="Extracellular" evidence="2">
    <location>
        <begin position="1"/>
        <end position="30"/>
    </location>
</feature>
<feature type="transmembrane region" description="Helical" evidence="2">
    <location>
        <begin position="31"/>
        <end position="51"/>
    </location>
</feature>
<feature type="topological domain" description="Cytoplasmic" evidence="2">
    <location>
        <begin position="52"/>
        <end position="68"/>
    </location>
</feature>
<feature type="transmembrane region" description="Helical" evidence="2">
    <location>
        <begin position="69"/>
        <end position="89"/>
    </location>
</feature>
<feature type="topological domain" description="Extracellular" evidence="2">
    <location>
        <begin position="90"/>
        <end position="104"/>
    </location>
</feature>
<feature type="transmembrane region" description="Helical" evidence="2">
    <location>
        <begin position="105"/>
        <end position="125"/>
    </location>
</feature>
<feature type="topological domain" description="Cytoplasmic" evidence="2">
    <location>
        <begin position="126"/>
        <end position="179"/>
    </location>
</feature>
<feature type="transmembrane region" description="Helical" evidence="2">
    <location>
        <begin position="180"/>
        <end position="200"/>
    </location>
</feature>
<feature type="topological domain" description="Extracellular" evidence="2">
    <location>
        <begin position="201"/>
        <end position="206"/>
    </location>
</feature>
<feature type="transmembrane region" description="Helical" evidence="2">
    <location>
        <begin position="207"/>
        <end position="227"/>
    </location>
</feature>
<feature type="topological domain" description="Cytoplasmic" evidence="2">
    <location>
        <begin position="228"/>
        <end position="237"/>
    </location>
</feature>
<feature type="transmembrane region" description="Helical" evidence="2">
    <location>
        <begin position="238"/>
        <end position="258"/>
    </location>
</feature>
<feature type="topological domain" description="Extracellular" evidence="2">
    <location>
        <begin position="259"/>
        <end position="272"/>
    </location>
</feature>
<feature type="transmembrane region" description="Helical" evidence="2">
    <location>
        <begin position="273"/>
        <end position="293"/>
    </location>
</feature>
<feature type="topological domain" description="Cytoplasmic" evidence="2">
    <location>
        <begin position="294"/>
        <end position="303"/>
    </location>
</feature>
<feature type="transmembrane region" description="Helical" evidence="2">
    <location>
        <begin position="304"/>
        <end position="324"/>
    </location>
</feature>
<feature type="sequence conflict" description="In Ref. 1; CAB59982." evidence="5" ref="1">
    <original>S</original>
    <variation>L</variation>
    <location>
        <position position="19"/>
    </location>
</feature>
<feature type="sequence conflict" description="In Ref. 1; CAB59982." evidence="5" ref="1">
    <original>V</original>
    <variation>G</variation>
    <location>
        <position position="29"/>
    </location>
</feature>
<feature type="sequence conflict" description="In Ref. 1; CAB59982." evidence="5" ref="1">
    <location>
        <position position="36"/>
    </location>
</feature>
<feature type="sequence conflict" description="In Ref. 1; CAB59982." evidence="5" ref="1">
    <original>C</original>
    <variation>G</variation>
    <location>
        <position position="44"/>
    </location>
</feature>
<feature type="sequence conflict" description="In Ref. 1; CAB59982 and 3; AAH05474." evidence="5" ref="1 3">
    <original>T</original>
    <variation>S</variation>
    <location>
        <position position="137"/>
    </location>
</feature>
<feature type="sequence conflict" description="In Ref. 1; CAB59982." evidence="5" ref="1">
    <original>PE</original>
    <variation>SK</variation>
    <location>
        <begin position="142"/>
        <end position="143"/>
    </location>
</feature>
<feature type="sequence conflict" description="In Ref. 1; CAB59982." evidence="5" ref="1">
    <original>A</original>
    <variation>T</variation>
    <location>
        <position position="177"/>
    </location>
</feature>
<feature type="sequence conflict" description="In Ref. 1; CAB59982." evidence="5" ref="1">
    <original>L</original>
    <variation>P</variation>
    <location>
        <position position="183"/>
    </location>
</feature>
<feature type="sequence conflict" description="In Ref. 1; CAB59982." evidence="5" ref="1">
    <original>LQRD</original>
    <variation>FQPN</variation>
    <location>
        <begin position="200"/>
        <end position="203"/>
    </location>
</feature>
<feature type="sequence conflict" description="In Ref. 1; CAB59982." evidence="5" ref="1">
    <original>EL</original>
    <variation>DC</variation>
    <location>
        <begin position="209"/>
        <end position="210"/>
    </location>
</feature>
<feature type="sequence conflict" description="In Ref. 1; CAB59982." evidence="5" ref="1">
    <original>A</original>
    <variation>E</variation>
    <location>
        <position position="279"/>
    </location>
</feature>
<feature type="sequence conflict" description="In Ref. 1; CAB59982." evidence="5" ref="1">
    <original>F</original>
    <variation>Y</variation>
    <location>
        <position position="288"/>
    </location>
</feature>
<comment type="function">
    <text evidence="4">Transporter for the divalent cation Zn(2+). Mediates the influx of Zn(2+) into cells from extracellular space.</text>
</comment>
<comment type="catalytic activity">
    <reaction evidence="4">
        <text>Zn(2+)(in) = Zn(2+)(out)</text>
        <dbReference type="Rhea" id="RHEA:29351"/>
        <dbReference type="ChEBI" id="CHEBI:29105"/>
    </reaction>
    <physiologicalReaction direction="left-to-right" evidence="6">
        <dbReference type="Rhea" id="RHEA:29352"/>
    </physiologicalReaction>
</comment>
<comment type="biophysicochemical properties">
    <kinetics>
        <KM evidence="4">1.7 uM for Zn(2+)</KM>
    </kinetics>
</comment>
<comment type="subcellular location">
    <subcellularLocation>
        <location evidence="1">Cell membrane</location>
        <topology evidence="2">Multi-pass membrane protein</topology>
    </subcellularLocation>
    <subcellularLocation>
        <location evidence="1">Endoplasmic reticulum membrane</location>
        <topology evidence="2">Multi-pass membrane protein</topology>
    </subcellularLocation>
    <text evidence="1">Shows a vesicular localization corresponding partially to the endoplasmic reticulum in several epithelial cell lines.</text>
</comment>
<comment type="tissue specificity">
    <text evidence="3 4">Ubiquitous, except in the pancreas (PubMed:10610721, PubMed:14525987). Highest levels seen in kidney, salivary gland and placenta.</text>
</comment>
<comment type="developmental stage">
    <text evidence="3">Found to be developmentally regulated in the skin where it is expressed in the epidermal layer, excluding the dermis, at embryonic day 17.5 dpc but not in 10.5 dpc and 15.5 dpc. In the small intestine found toward the base of the intestinal villi from 17.5 dpc. In the pancreas, expression was detected from 17.5 dpc and no expression was found in the liver. Also expressed in osteoblasts of developing bone from 15.5 dpc.</text>
</comment>
<comment type="similarity">
    <text evidence="5">Belongs to the ZIP transporter (TC 2.A.5) family.</text>
</comment>
<comment type="sequence caution" evidence="5">
    <conflict type="frameshift">
        <sequence resource="EMBL-CDS" id="CAB59982"/>
    </conflict>
</comment>
<accession>Q9QZ03</accession>
<accession>A2RTD4</accession>
<accession>Q99K44</accession>
<sequence length="324" mass="34293">MGPWGEPELLVWRPEAVASEPSVPVGLEVKLGALVLLLLLTLICSLVPVCVLRRSGANHEASASGQKALSLVSCFAGGVFLATCLLDLLPDYLAAIDEALEALHVTLQFPLQEFILAMGFFLVLVMEQITLAYKEQTSPPHPEETRALLGTVNGGPQHWHDGPGIPQAGGTPAAPSALRACVLVFSLALHSVFEGLAVGLQRDRARAMELCLALLLHKGILAVSLSLRLLQSHLRVQVVAGCGILFSCMTPLGIGLGAALAESAGPLHQLAQSVLEGMAAGTFLYITFLEILPQELATSEQRILKVILLLAGFALLTGLLFVQI</sequence>
<dbReference type="EMBL" id="AJ243651">
    <property type="protein sequence ID" value="CAB59982.1"/>
    <property type="status" value="ALT_FRAME"/>
    <property type="molecule type" value="Genomic_DNA"/>
</dbReference>
<dbReference type="EMBL" id="CH466547">
    <property type="protein sequence ID" value="EDL15152.1"/>
    <property type="molecule type" value="Genomic_DNA"/>
</dbReference>
<dbReference type="EMBL" id="BC005474">
    <property type="protein sequence ID" value="AAH05474.1"/>
    <property type="molecule type" value="mRNA"/>
</dbReference>
<dbReference type="EMBL" id="BC132461">
    <property type="protein sequence ID" value="AAI32462.1"/>
    <property type="molecule type" value="mRNA"/>
</dbReference>
<dbReference type="EMBL" id="BC138459">
    <property type="protein sequence ID" value="AAI38460.1"/>
    <property type="molecule type" value="mRNA"/>
</dbReference>
<dbReference type="EMBL" id="BC147738">
    <property type="protein sequence ID" value="AAI47739.1"/>
    <property type="molecule type" value="mRNA"/>
</dbReference>
<dbReference type="EMBL" id="BC147744">
    <property type="protein sequence ID" value="AAI47745.1"/>
    <property type="molecule type" value="mRNA"/>
</dbReference>
<dbReference type="CCDS" id="CCDS17525.1"/>
<dbReference type="RefSeq" id="NP_001398434.1">
    <property type="nucleotide sequence ID" value="NM_001411505.1"/>
</dbReference>
<dbReference type="RefSeq" id="NP_038929.2">
    <property type="nucleotide sequence ID" value="NM_013901.3"/>
</dbReference>
<dbReference type="RefSeq" id="XP_006501623.1">
    <property type="nucleotide sequence ID" value="XM_006501560.3"/>
</dbReference>
<dbReference type="SMR" id="Q9QZ03"/>
<dbReference type="BioGRID" id="205964">
    <property type="interactions" value="3"/>
</dbReference>
<dbReference type="FunCoup" id="Q9QZ03">
    <property type="interactions" value="537"/>
</dbReference>
<dbReference type="STRING" id="10090.ENSMUSP00000076012"/>
<dbReference type="iPTMnet" id="Q9QZ03"/>
<dbReference type="PhosphoSitePlus" id="Q9QZ03"/>
<dbReference type="SwissPalm" id="Q9QZ03"/>
<dbReference type="PaxDb" id="10090-ENSMUSP00000076012"/>
<dbReference type="ProteomicsDB" id="256572"/>
<dbReference type="Pumba" id="Q9QZ03"/>
<dbReference type="Antibodypedia" id="20389">
    <property type="antibodies" value="107 antibodies from 27 providers"/>
</dbReference>
<dbReference type="DNASU" id="30791"/>
<dbReference type="Ensembl" id="ENSMUST00000015467.9">
    <property type="protein sequence ID" value="ENSMUSP00000076012.7"/>
    <property type="gene ID" value="ENSMUSG00000052310.10"/>
</dbReference>
<dbReference type="GeneID" id="30791"/>
<dbReference type="KEGG" id="mmu:30791"/>
<dbReference type="UCSC" id="uc012csu.1">
    <property type="organism name" value="mouse"/>
</dbReference>
<dbReference type="AGR" id="MGI:1353474"/>
<dbReference type="CTD" id="27173"/>
<dbReference type="MGI" id="MGI:1353474">
    <property type="gene designation" value="Slc39a1"/>
</dbReference>
<dbReference type="VEuPathDB" id="HostDB:ENSMUSG00000052310"/>
<dbReference type="eggNOG" id="KOG1558">
    <property type="taxonomic scope" value="Eukaryota"/>
</dbReference>
<dbReference type="GeneTree" id="ENSGT00940000157062"/>
<dbReference type="HOGENOM" id="CLU_040462_1_0_1"/>
<dbReference type="InParanoid" id="Q9QZ03"/>
<dbReference type="OMA" id="HEMSHTH"/>
<dbReference type="OrthoDB" id="448280at2759"/>
<dbReference type="PhylomeDB" id="Q9QZ03"/>
<dbReference type="TreeFam" id="TF317098"/>
<dbReference type="Reactome" id="R-MMU-442380">
    <property type="pathway name" value="Zinc influx into cells by the SLC39 gene family"/>
</dbReference>
<dbReference type="BioGRID-ORCS" id="30791">
    <property type="hits" value="5 hits in 76 CRISPR screens"/>
</dbReference>
<dbReference type="ChiTaRS" id="Slc39a1">
    <property type="organism name" value="mouse"/>
</dbReference>
<dbReference type="PRO" id="PR:Q9QZ03"/>
<dbReference type="Proteomes" id="UP000000589">
    <property type="component" value="Chromosome 3"/>
</dbReference>
<dbReference type="RNAct" id="Q9QZ03">
    <property type="molecule type" value="protein"/>
</dbReference>
<dbReference type="Bgee" id="ENSMUSG00000052310">
    <property type="expression patterns" value="Expressed in prostate gland and 152 other cell types or tissues"/>
</dbReference>
<dbReference type="GO" id="GO:0005789">
    <property type="term" value="C:endoplasmic reticulum membrane"/>
    <property type="evidence" value="ECO:0007669"/>
    <property type="project" value="UniProtKB-SubCell"/>
</dbReference>
<dbReference type="GO" id="GO:0005886">
    <property type="term" value="C:plasma membrane"/>
    <property type="evidence" value="ECO:0000250"/>
    <property type="project" value="UniProtKB"/>
</dbReference>
<dbReference type="GO" id="GO:0005102">
    <property type="term" value="F:signaling receptor binding"/>
    <property type="evidence" value="ECO:0007669"/>
    <property type="project" value="Ensembl"/>
</dbReference>
<dbReference type="GO" id="GO:0005385">
    <property type="term" value="F:zinc ion transmembrane transporter activity"/>
    <property type="evidence" value="ECO:0000314"/>
    <property type="project" value="MGI"/>
</dbReference>
<dbReference type="GO" id="GO:0048701">
    <property type="term" value="P:embryonic cranial skeleton morphogenesis"/>
    <property type="evidence" value="ECO:0000315"/>
    <property type="project" value="MGI"/>
</dbReference>
<dbReference type="GO" id="GO:0001701">
    <property type="term" value="P:in utero embryonic development"/>
    <property type="evidence" value="ECO:0000315"/>
    <property type="project" value="MGI"/>
</dbReference>
<dbReference type="GO" id="GO:0060173">
    <property type="term" value="P:limb development"/>
    <property type="evidence" value="ECO:0000315"/>
    <property type="project" value="MGI"/>
</dbReference>
<dbReference type="GO" id="GO:0006829">
    <property type="term" value="P:zinc ion transport"/>
    <property type="evidence" value="ECO:0000314"/>
    <property type="project" value="MGI"/>
</dbReference>
<dbReference type="InterPro" id="IPR003689">
    <property type="entry name" value="ZIP"/>
</dbReference>
<dbReference type="PANTHER" id="PTHR11040:SF58">
    <property type="entry name" value="ZINC TRANSPORTER ZIP1"/>
    <property type="match status" value="1"/>
</dbReference>
<dbReference type="PANTHER" id="PTHR11040">
    <property type="entry name" value="ZINC/IRON TRANSPORTER"/>
    <property type="match status" value="1"/>
</dbReference>
<dbReference type="Pfam" id="PF02535">
    <property type="entry name" value="Zip"/>
    <property type="match status" value="1"/>
</dbReference>
<gene>
    <name type="primary">Slc39a1</name>
    <name type="synonym">Zip1</name>
    <name type="synonym">Zirtl</name>
</gene>
<keyword id="KW-1003">Cell membrane</keyword>
<keyword id="KW-0256">Endoplasmic reticulum</keyword>
<keyword id="KW-0406">Ion transport</keyword>
<keyword id="KW-0472">Membrane</keyword>
<keyword id="KW-1185">Reference proteome</keyword>
<keyword id="KW-0812">Transmembrane</keyword>
<keyword id="KW-1133">Transmembrane helix</keyword>
<keyword id="KW-0813">Transport</keyword>
<keyword id="KW-0862">Zinc</keyword>
<keyword id="KW-0864">Zinc transport</keyword>
<evidence type="ECO:0000250" key="1">
    <source>
        <dbReference type="UniProtKB" id="Q9NY26"/>
    </source>
</evidence>
<evidence type="ECO:0000255" key="2"/>
<evidence type="ECO:0000269" key="3">
    <source>
    </source>
</evidence>
<evidence type="ECO:0000269" key="4">
    <source>
    </source>
</evidence>
<evidence type="ECO:0000305" key="5"/>
<evidence type="ECO:0000305" key="6">
    <source>
    </source>
</evidence>
<organism>
    <name type="scientific">Mus musculus</name>
    <name type="common">Mouse</name>
    <dbReference type="NCBI Taxonomy" id="10090"/>
    <lineage>
        <taxon>Eukaryota</taxon>
        <taxon>Metazoa</taxon>
        <taxon>Chordata</taxon>
        <taxon>Craniata</taxon>
        <taxon>Vertebrata</taxon>
        <taxon>Euteleostomi</taxon>
        <taxon>Mammalia</taxon>
        <taxon>Eutheria</taxon>
        <taxon>Euarchontoglires</taxon>
        <taxon>Glires</taxon>
        <taxon>Rodentia</taxon>
        <taxon>Myomorpha</taxon>
        <taxon>Muroidea</taxon>
        <taxon>Muridae</taxon>
        <taxon>Murinae</taxon>
        <taxon>Mus</taxon>
        <taxon>Mus</taxon>
    </lineage>
</organism>
<reference key="1">
    <citation type="journal article" date="1999" name="Genomics">
        <title>Isolation and characterization of human and mouse ZIRTL, a member of the IRT1 family of transporters, mapping within the epidermal differentiation complex.</title>
        <authorList>
            <person name="Lioumi M."/>
            <person name="Ferguson C.A."/>
            <person name="Sharpe P.T."/>
            <person name="Freeman T."/>
            <person name="Marenholz I."/>
            <person name="Mischke D."/>
            <person name="Heizmann C."/>
            <person name="Ragoussis J."/>
        </authorList>
    </citation>
    <scope>NUCLEOTIDE SEQUENCE [GENOMIC DNA]</scope>
    <scope>TISSUE SPECIFICITY</scope>
    <scope>DEVELOPMENTAL STAGE</scope>
</reference>
<reference key="2">
    <citation type="submission" date="2005-09" db="EMBL/GenBank/DDBJ databases">
        <authorList>
            <person name="Mural R.J."/>
            <person name="Adams M.D."/>
            <person name="Myers E.W."/>
            <person name="Smith H.O."/>
            <person name="Venter J.C."/>
        </authorList>
    </citation>
    <scope>NUCLEOTIDE SEQUENCE [LARGE SCALE GENOMIC DNA]</scope>
</reference>
<reference key="3">
    <citation type="journal article" date="2004" name="Genome Res.">
        <title>The status, quality, and expansion of the NIH full-length cDNA project: the Mammalian Gene Collection (MGC).</title>
        <authorList>
            <consortium name="The MGC Project Team"/>
        </authorList>
    </citation>
    <scope>NUCLEOTIDE SEQUENCE [LARGE SCALE MRNA]</scope>
    <source>
        <tissue>Brain</tissue>
        <tissue>Mammary tumor</tissue>
    </source>
</reference>
<reference key="4">
    <citation type="journal article" date="2003" name="J. Biol. Chem.">
        <title>Structure, function, and regulation of a subfamily of mouse zinc transporter genes.</title>
        <authorList>
            <person name="Dufner-Beattie J."/>
            <person name="Langmade S.J."/>
            <person name="Wang F."/>
            <person name="Eide D."/>
            <person name="Andrews G.K."/>
        </authorList>
    </citation>
    <scope>FUNCTION</scope>
    <scope>TRANSPORTER ACTIVITY</scope>
    <scope>BIOPHYSICOCHEMICAL PROPERTIES</scope>
    <scope>TISSUE SPECIFICITY</scope>
</reference>
<name>S39A1_MOUSE</name>
<proteinExistence type="evidence at protein level"/>